<feature type="chain" id="PRO_1000198723" description="Tryptophan synthase alpha chain">
    <location>
        <begin position="1"/>
        <end position="268"/>
    </location>
</feature>
<feature type="active site" description="Proton acceptor" evidence="1">
    <location>
        <position position="49"/>
    </location>
</feature>
<feature type="active site" description="Proton acceptor" evidence="1">
    <location>
        <position position="60"/>
    </location>
</feature>
<sequence length="268" mass="28688">MERYENLFAQLNDRREGAFVPFVTLGDPGIEQSLKIIDTLIDSGADALELGVPFSDPLADGPTIQNANLRAFAAGVTPAQCFEMLALIREKHPTIPIGLLMYANLVFNNGIDAFYARCEQVGVDSVLVADVPVEESAPFRQAALRHNIAPIFICPPNADDDLLRQVASYGRGYTYLLSRSGVTGAENRGALPLHHLIEKLKEYHAAPALQGFGISSPEQVSAAVRAGAAGAISGSAIVKIIEKNLASPEQMLAELRSFVSAMKAASRA</sequence>
<keyword id="KW-0028">Amino-acid biosynthesis</keyword>
<keyword id="KW-0057">Aromatic amino acid biosynthesis</keyword>
<keyword id="KW-0456">Lyase</keyword>
<keyword id="KW-0822">Tryptophan biosynthesis</keyword>
<comment type="function">
    <text evidence="1">The alpha subunit is responsible for the aldol cleavage of indoleglycerol phosphate to indole and glyceraldehyde 3-phosphate.</text>
</comment>
<comment type="catalytic activity">
    <reaction evidence="1">
        <text>(1S,2R)-1-C-(indol-3-yl)glycerol 3-phosphate + L-serine = D-glyceraldehyde 3-phosphate + L-tryptophan + H2O</text>
        <dbReference type="Rhea" id="RHEA:10532"/>
        <dbReference type="ChEBI" id="CHEBI:15377"/>
        <dbReference type="ChEBI" id="CHEBI:33384"/>
        <dbReference type="ChEBI" id="CHEBI:57912"/>
        <dbReference type="ChEBI" id="CHEBI:58866"/>
        <dbReference type="ChEBI" id="CHEBI:59776"/>
        <dbReference type="EC" id="4.2.1.20"/>
    </reaction>
</comment>
<comment type="pathway">
    <text evidence="1">Amino-acid biosynthesis; L-tryptophan biosynthesis; L-tryptophan from chorismate: step 5/5.</text>
</comment>
<comment type="subunit">
    <text evidence="1">Tetramer of two alpha and two beta chains.</text>
</comment>
<comment type="similarity">
    <text evidence="1">Belongs to the TrpA family.</text>
</comment>
<proteinExistence type="inferred from homology"/>
<accession>C0Q3N3</accession>
<organism>
    <name type="scientific">Salmonella paratyphi C (strain RKS4594)</name>
    <dbReference type="NCBI Taxonomy" id="476213"/>
    <lineage>
        <taxon>Bacteria</taxon>
        <taxon>Pseudomonadati</taxon>
        <taxon>Pseudomonadota</taxon>
        <taxon>Gammaproteobacteria</taxon>
        <taxon>Enterobacterales</taxon>
        <taxon>Enterobacteriaceae</taxon>
        <taxon>Salmonella</taxon>
    </lineage>
</organism>
<name>TRPA_SALPC</name>
<dbReference type="EC" id="4.2.1.20" evidence="1"/>
<dbReference type="EMBL" id="CP000857">
    <property type="protein sequence ID" value="ACN46138.1"/>
    <property type="molecule type" value="Genomic_DNA"/>
</dbReference>
<dbReference type="RefSeq" id="WP_000443036.1">
    <property type="nucleotide sequence ID" value="NC_012125.1"/>
</dbReference>
<dbReference type="SMR" id="C0Q3N3"/>
<dbReference type="KEGG" id="sei:SPC_2002"/>
<dbReference type="HOGENOM" id="CLU_016734_0_4_6"/>
<dbReference type="UniPathway" id="UPA00035">
    <property type="reaction ID" value="UER00044"/>
</dbReference>
<dbReference type="Proteomes" id="UP000001599">
    <property type="component" value="Chromosome"/>
</dbReference>
<dbReference type="GO" id="GO:0005829">
    <property type="term" value="C:cytosol"/>
    <property type="evidence" value="ECO:0007669"/>
    <property type="project" value="TreeGrafter"/>
</dbReference>
<dbReference type="GO" id="GO:0004834">
    <property type="term" value="F:tryptophan synthase activity"/>
    <property type="evidence" value="ECO:0007669"/>
    <property type="project" value="UniProtKB-UniRule"/>
</dbReference>
<dbReference type="CDD" id="cd04724">
    <property type="entry name" value="Tryptophan_synthase_alpha"/>
    <property type="match status" value="1"/>
</dbReference>
<dbReference type="FunFam" id="3.20.20.70:FF:000037">
    <property type="entry name" value="Tryptophan synthase alpha chain"/>
    <property type="match status" value="1"/>
</dbReference>
<dbReference type="Gene3D" id="3.20.20.70">
    <property type="entry name" value="Aldolase class I"/>
    <property type="match status" value="1"/>
</dbReference>
<dbReference type="HAMAP" id="MF_00131">
    <property type="entry name" value="Trp_synth_alpha"/>
    <property type="match status" value="1"/>
</dbReference>
<dbReference type="InterPro" id="IPR013785">
    <property type="entry name" value="Aldolase_TIM"/>
</dbReference>
<dbReference type="InterPro" id="IPR011060">
    <property type="entry name" value="RibuloseP-bd_barrel"/>
</dbReference>
<dbReference type="InterPro" id="IPR018204">
    <property type="entry name" value="Trp_synthase_alpha_AS"/>
</dbReference>
<dbReference type="InterPro" id="IPR002028">
    <property type="entry name" value="Trp_synthase_suA"/>
</dbReference>
<dbReference type="NCBIfam" id="TIGR00262">
    <property type="entry name" value="trpA"/>
    <property type="match status" value="1"/>
</dbReference>
<dbReference type="PANTHER" id="PTHR43406:SF1">
    <property type="entry name" value="TRYPTOPHAN SYNTHASE ALPHA CHAIN, CHLOROPLASTIC"/>
    <property type="match status" value="1"/>
</dbReference>
<dbReference type="PANTHER" id="PTHR43406">
    <property type="entry name" value="TRYPTOPHAN SYNTHASE, ALPHA CHAIN"/>
    <property type="match status" value="1"/>
</dbReference>
<dbReference type="Pfam" id="PF00290">
    <property type="entry name" value="Trp_syntA"/>
    <property type="match status" value="1"/>
</dbReference>
<dbReference type="SUPFAM" id="SSF51366">
    <property type="entry name" value="Ribulose-phoshate binding barrel"/>
    <property type="match status" value="1"/>
</dbReference>
<dbReference type="PROSITE" id="PS00167">
    <property type="entry name" value="TRP_SYNTHASE_ALPHA"/>
    <property type="match status" value="1"/>
</dbReference>
<evidence type="ECO:0000255" key="1">
    <source>
        <dbReference type="HAMAP-Rule" id="MF_00131"/>
    </source>
</evidence>
<reference key="1">
    <citation type="journal article" date="2009" name="PLoS ONE">
        <title>Salmonella paratyphi C: genetic divergence from Salmonella choleraesuis and pathogenic convergence with Salmonella typhi.</title>
        <authorList>
            <person name="Liu W.-Q."/>
            <person name="Feng Y."/>
            <person name="Wang Y."/>
            <person name="Zou Q.-H."/>
            <person name="Chen F."/>
            <person name="Guo J.-T."/>
            <person name="Peng Y.-H."/>
            <person name="Jin Y."/>
            <person name="Li Y.-G."/>
            <person name="Hu S.-N."/>
            <person name="Johnston R.N."/>
            <person name="Liu G.-R."/>
            <person name="Liu S.-L."/>
        </authorList>
    </citation>
    <scope>NUCLEOTIDE SEQUENCE [LARGE SCALE GENOMIC DNA]</scope>
    <source>
        <strain>RKS4594</strain>
    </source>
</reference>
<protein>
    <recommendedName>
        <fullName evidence="1">Tryptophan synthase alpha chain</fullName>
        <ecNumber evidence="1">4.2.1.20</ecNumber>
    </recommendedName>
</protein>
<gene>
    <name evidence="1" type="primary">trpA</name>
    <name type="ordered locus">SPC_2002</name>
</gene>